<organism>
    <name type="scientific">Lacticaseibacillus paracasei (strain ATCC 334 / BCRC 17002 / CCUG 31169 / CIP 107868 / KCTC 3260 / NRRL B-441)</name>
    <name type="common">Lactobacillus paracasei</name>
    <dbReference type="NCBI Taxonomy" id="321967"/>
    <lineage>
        <taxon>Bacteria</taxon>
        <taxon>Bacillati</taxon>
        <taxon>Bacillota</taxon>
        <taxon>Bacilli</taxon>
        <taxon>Lactobacillales</taxon>
        <taxon>Lactobacillaceae</taxon>
        <taxon>Lacticaseibacillus</taxon>
    </lineage>
</organism>
<dbReference type="EC" id="2.7.1.6" evidence="1"/>
<dbReference type="EMBL" id="CP000423">
    <property type="protein sequence ID" value="ABJ69504.1"/>
    <property type="molecule type" value="Genomic_DNA"/>
</dbReference>
<dbReference type="RefSeq" id="WP_011674227.1">
    <property type="nucleotide sequence ID" value="NC_008526.1"/>
</dbReference>
<dbReference type="RefSeq" id="YP_805946.1">
    <property type="nucleotide sequence ID" value="NC_008526.1"/>
</dbReference>
<dbReference type="SMR" id="Q03BB8"/>
<dbReference type="STRING" id="321967.LSEI_0664"/>
<dbReference type="PaxDb" id="321967-LSEI_0664"/>
<dbReference type="KEGG" id="lca:LSEI_0664"/>
<dbReference type="PATRIC" id="fig|321967.11.peg.668"/>
<dbReference type="HOGENOM" id="CLU_017814_2_1_9"/>
<dbReference type="UniPathway" id="UPA00214"/>
<dbReference type="Proteomes" id="UP000001651">
    <property type="component" value="Chromosome"/>
</dbReference>
<dbReference type="GO" id="GO:0005829">
    <property type="term" value="C:cytosol"/>
    <property type="evidence" value="ECO:0007669"/>
    <property type="project" value="TreeGrafter"/>
</dbReference>
<dbReference type="GO" id="GO:0005524">
    <property type="term" value="F:ATP binding"/>
    <property type="evidence" value="ECO:0007669"/>
    <property type="project" value="UniProtKB-UniRule"/>
</dbReference>
<dbReference type="GO" id="GO:0004335">
    <property type="term" value="F:galactokinase activity"/>
    <property type="evidence" value="ECO:0007669"/>
    <property type="project" value="UniProtKB-UniRule"/>
</dbReference>
<dbReference type="GO" id="GO:0000287">
    <property type="term" value="F:magnesium ion binding"/>
    <property type="evidence" value="ECO:0007669"/>
    <property type="project" value="UniProtKB-UniRule"/>
</dbReference>
<dbReference type="GO" id="GO:0006012">
    <property type="term" value="P:galactose metabolic process"/>
    <property type="evidence" value="ECO:0007669"/>
    <property type="project" value="UniProtKB-UniRule"/>
</dbReference>
<dbReference type="FunFam" id="3.30.230.10:FF:000017">
    <property type="entry name" value="Galactokinase"/>
    <property type="match status" value="1"/>
</dbReference>
<dbReference type="FunFam" id="3.30.70.890:FF:000001">
    <property type="entry name" value="Galactokinase"/>
    <property type="match status" value="1"/>
</dbReference>
<dbReference type="Gene3D" id="3.30.230.10">
    <property type="match status" value="1"/>
</dbReference>
<dbReference type="Gene3D" id="3.30.70.890">
    <property type="entry name" value="GHMP kinase, C-terminal domain"/>
    <property type="match status" value="1"/>
</dbReference>
<dbReference type="HAMAP" id="MF_00246">
    <property type="entry name" value="Galactokinase"/>
    <property type="match status" value="1"/>
</dbReference>
<dbReference type="InterPro" id="IPR000705">
    <property type="entry name" value="Galactokinase"/>
</dbReference>
<dbReference type="InterPro" id="IPR022963">
    <property type="entry name" value="Galactokinase_bac"/>
</dbReference>
<dbReference type="InterPro" id="IPR019741">
    <property type="entry name" value="Galactokinase_CS"/>
</dbReference>
<dbReference type="InterPro" id="IPR019539">
    <property type="entry name" value="GalKase_N"/>
</dbReference>
<dbReference type="InterPro" id="IPR013750">
    <property type="entry name" value="GHMP_kinase_C_dom"/>
</dbReference>
<dbReference type="InterPro" id="IPR036554">
    <property type="entry name" value="GHMP_kinase_C_sf"/>
</dbReference>
<dbReference type="InterPro" id="IPR006204">
    <property type="entry name" value="GHMP_kinase_N_dom"/>
</dbReference>
<dbReference type="InterPro" id="IPR006203">
    <property type="entry name" value="GHMP_knse_ATP-bd_CS"/>
</dbReference>
<dbReference type="InterPro" id="IPR006206">
    <property type="entry name" value="Mevalonate/galactokinase"/>
</dbReference>
<dbReference type="InterPro" id="IPR020568">
    <property type="entry name" value="Ribosomal_Su5_D2-typ_SF"/>
</dbReference>
<dbReference type="InterPro" id="IPR014721">
    <property type="entry name" value="Ribsml_uS5_D2-typ_fold_subgr"/>
</dbReference>
<dbReference type="NCBIfam" id="TIGR00131">
    <property type="entry name" value="gal_kin"/>
    <property type="match status" value="1"/>
</dbReference>
<dbReference type="NCBIfam" id="NF003705">
    <property type="entry name" value="PRK05322.1"/>
    <property type="match status" value="1"/>
</dbReference>
<dbReference type="PANTHER" id="PTHR10457:SF7">
    <property type="entry name" value="GALACTOKINASE-RELATED"/>
    <property type="match status" value="1"/>
</dbReference>
<dbReference type="PANTHER" id="PTHR10457">
    <property type="entry name" value="MEVALONATE KINASE/GALACTOKINASE"/>
    <property type="match status" value="1"/>
</dbReference>
<dbReference type="Pfam" id="PF10509">
    <property type="entry name" value="GalKase_gal_bdg"/>
    <property type="match status" value="1"/>
</dbReference>
<dbReference type="Pfam" id="PF08544">
    <property type="entry name" value="GHMP_kinases_C"/>
    <property type="match status" value="1"/>
</dbReference>
<dbReference type="Pfam" id="PF00288">
    <property type="entry name" value="GHMP_kinases_N"/>
    <property type="match status" value="1"/>
</dbReference>
<dbReference type="PIRSF" id="PIRSF000530">
    <property type="entry name" value="Galactokinase"/>
    <property type="match status" value="1"/>
</dbReference>
<dbReference type="PRINTS" id="PR00473">
    <property type="entry name" value="GALCTOKINASE"/>
</dbReference>
<dbReference type="PRINTS" id="PR00959">
    <property type="entry name" value="MEVGALKINASE"/>
</dbReference>
<dbReference type="SUPFAM" id="SSF55060">
    <property type="entry name" value="GHMP Kinase, C-terminal domain"/>
    <property type="match status" value="1"/>
</dbReference>
<dbReference type="SUPFAM" id="SSF54211">
    <property type="entry name" value="Ribosomal protein S5 domain 2-like"/>
    <property type="match status" value="1"/>
</dbReference>
<dbReference type="PROSITE" id="PS00106">
    <property type="entry name" value="GALACTOKINASE"/>
    <property type="match status" value="1"/>
</dbReference>
<dbReference type="PROSITE" id="PS00627">
    <property type="entry name" value="GHMP_KINASES_ATP"/>
    <property type="match status" value="1"/>
</dbReference>
<feature type="chain" id="PRO_1000005755" description="Galactokinase">
    <location>
        <begin position="1"/>
        <end position="388"/>
    </location>
</feature>
<feature type="active site" description="Proton acceptor" evidence="1">
    <location>
        <position position="174"/>
    </location>
</feature>
<feature type="binding site" evidence="1">
    <location>
        <begin position="33"/>
        <end position="36"/>
    </location>
    <ligand>
        <name>substrate</name>
    </ligand>
</feature>
<feature type="binding site" evidence="1">
    <location>
        <position position="67"/>
    </location>
    <ligand>
        <name>ATP</name>
        <dbReference type="ChEBI" id="CHEBI:30616"/>
    </ligand>
</feature>
<feature type="binding site" evidence="1">
    <location>
        <begin position="124"/>
        <end position="130"/>
    </location>
    <ligand>
        <name>ATP</name>
        <dbReference type="ChEBI" id="CHEBI:30616"/>
    </ligand>
</feature>
<feature type="binding site" evidence="1">
    <location>
        <position position="130"/>
    </location>
    <ligand>
        <name>Mg(2+)</name>
        <dbReference type="ChEBI" id="CHEBI:18420"/>
    </ligand>
</feature>
<feature type="binding site" evidence="1">
    <location>
        <position position="162"/>
    </location>
    <ligand>
        <name>Mg(2+)</name>
        <dbReference type="ChEBI" id="CHEBI:18420"/>
    </ligand>
</feature>
<feature type="binding site" evidence="1">
    <location>
        <position position="224"/>
    </location>
    <ligand>
        <name>substrate</name>
    </ligand>
</feature>
<feature type="site" description="Transition state stabilizer" evidence="1">
    <location>
        <position position="27"/>
    </location>
</feature>
<reference key="1">
    <citation type="journal article" date="2006" name="Proc. Natl. Acad. Sci. U.S.A.">
        <title>Comparative genomics of the lactic acid bacteria.</title>
        <authorList>
            <person name="Makarova K.S."/>
            <person name="Slesarev A."/>
            <person name="Wolf Y.I."/>
            <person name="Sorokin A."/>
            <person name="Mirkin B."/>
            <person name="Koonin E.V."/>
            <person name="Pavlov A."/>
            <person name="Pavlova N."/>
            <person name="Karamychev V."/>
            <person name="Polouchine N."/>
            <person name="Shakhova V."/>
            <person name="Grigoriev I."/>
            <person name="Lou Y."/>
            <person name="Rohksar D."/>
            <person name="Lucas S."/>
            <person name="Huang K."/>
            <person name="Goodstein D.M."/>
            <person name="Hawkins T."/>
            <person name="Plengvidhya V."/>
            <person name="Welker D."/>
            <person name="Hughes J."/>
            <person name="Goh Y."/>
            <person name="Benson A."/>
            <person name="Baldwin K."/>
            <person name="Lee J.-H."/>
            <person name="Diaz-Muniz I."/>
            <person name="Dosti B."/>
            <person name="Smeianov V."/>
            <person name="Wechter W."/>
            <person name="Barabote R."/>
            <person name="Lorca G."/>
            <person name="Altermann E."/>
            <person name="Barrangou R."/>
            <person name="Ganesan B."/>
            <person name="Xie Y."/>
            <person name="Rawsthorne H."/>
            <person name="Tamir D."/>
            <person name="Parker C."/>
            <person name="Breidt F."/>
            <person name="Broadbent J.R."/>
            <person name="Hutkins R."/>
            <person name="O'Sullivan D."/>
            <person name="Steele J."/>
            <person name="Unlu G."/>
            <person name="Saier M.H. Jr."/>
            <person name="Klaenhammer T."/>
            <person name="Richardson P."/>
            <person name="Kozyavkin S."/>
            <person name="Weimer B.C."/>
            <person name="Mills D.A."/>
        </authorList>
    </citation>
    <scope>NUCLEOTIDE SEQUENCE [LARGE SCALE GENOMIC DNA]</scope>
    <source>
        <strain>ATCC 334 / BCRC 17002 / CCUG 31169 / CIP 107868 / KCTC 3260 / NRRL B-441</strain>
    </source>
</reference>
<protein>
    <recommendedName>
        <fullName evidence="1">Galactokinase</fullName>
        <ecNumber evidence="1">2.7.1.6</ecNumber>
    </recommendedName>
    <alternativeName>
        <fullName evidence="1">Galactose kinase</fullName>
    </alternativeName>
</protein>
<evidence type="ECO:0000255" key="1">
    <source>
        <dbReference type="HAMAP-Rule" id="MF_00246"/>
    </source>
</evidence>
<sequence length="388" mass="42562">MNSTDVTKGFTEQFGKQAEHTFFAPGRINLIGEHTDYNGGHVFPCAISLGTYAAVGTNEDNAFRLYSANFPKVGIIDIPFSDLFQDKRGLWTDYFQGMARVMKTAGANFTHGLNVYINGNLPDGAGLSSSASLEMLVGTILNNLFDGGFEPLELVQFGVKVENDYIGVNSGVMDQFAIEMGRANQATLLDTNTMKYEYLPVEMGDNVIVIMNTNKRRELADSKYNERRSECEKALAMLQKGIEVKSLGQLSEDEFDENTYLIYDPILIKRARHAVFENQRTLKASKALQDGDLKTFGKLVSASGVSLAFDYEVTGIELDTLVTNALKQRGVLGARMTGAGFGGCAIAIVNSADVEDFIDNVGKAYREKIGYDAHFYVADIADGARQLN</sequence>
<comment type="function">
    <text evidence="1">Catalyzes the transfer of the gamma-phosphate of ATP to D-galactose to form alpha-D-galactose-1-phosphate (Gal-1-P).</text>
</comment>
<comment type="catalytic activity">
    <reaction evidence="1">
        <text>alpha-D-galactose + ATP = alpha-D-galactose 1-phosphate + ADP + H(+)</text>
        <dbReference type="Rhea" id="RHEA:13553"/>
        <dbReference type="ChEBI" id="CHEBI:15378"/>
        <dbReference type="ChEBI" id="CHEBI:28061"/>
        <dbReference type="ChEBI" id="CHEBI:30616"/>
        <dbReference type="ChEBI" id="CHEBI:58336"/>
        <dbReference type="ChEBI" id="CHEBI:456216"/>
        <dbReference type="EC" id="2.7.1.6"/>
    </reaction>
</comment>
<comment type="pathway">
    <text evidence="1">Carbohydrate metabolism; galactose metabolism.</text>
</comment>
<comment type="subcellular location">
    <subcellularLocation>
        <location evidence="1">Cytoplasm</location>
    </subcellularLocation>
</comment>
<comment type="similarity">
    <text evidence="1">Belongs to the GHMP kinase family. GalK subfamily.</text>
</comment>
<accession>Q03BB8</accession>
<proteinExistence type="inferred from homology"/>
<keyword id="KW-0067">ATP-binding</keyword>
<keyword id="KW-0119">Carbohydrate metabolism</keyword>
<keyword id="KW-0963">Cytoplasm</keyword>
<keyword id="KW-0299">Galactose metabolism</keyword>
<keyword id="KW-0418">Kinase</keyword>
<keyword id="KW-0460">Magnesium</keyword>
<keyword id="KW-0479">Metal-binding</keyword>
<keyword id="KW-0547">Nucleotide-binding</keyword>
<keyword id="KW-1185">Reference proteome</keyword>
<keyword id="KW-0808">Transferase</keyword>
<name>GAL1_LACP3</name>
<gene>
    <name evidence="1" type="primary">galK</name>
    <name type="ordered locus">LSEI_0664</name>
</gene>